<feature type="signal peptide" evidence="2">
    <location>
        <begin position="1"/>
        <end position="47"/>
    </location>
</feature>
<feature type="propeptide" id="PRO_0000029200" evidence="1">
    <location>
        <begin position="48"/>
        <end position="284"/>
    </location>
</feature>
<feature type="chain" id="PRO_0000042163" description="A disintegrin and metalloproteinase with thrombospondin motifs 18">
    <location>
        <begin position="285"/>
        <end position="1221"/>
    </location>
</feature>
<feature type="domain" description="Peptidase M12B" evidence="5">
    <location>
        <begin position="293"/>
        <end position="498"/>
    </location>
</feature>
<feature type="domain" description="Disintegrin">
    <location>
        <begin position="498"/>
        <end position="577"/>
    </location>
</feature>
<feature type="domain" description="TSP type-1 1" evidence="3">
    <location>
        <begin position="589"/>
        <end position="644"/>
    </location>
</feature>
<feature type="domain" description="TSP type-1 2" evidence="3">
    <location>
        <begin position="931"/>
        <end position="990"/>
    </location>
</feature>
<feature type="domain" description="TSP type-1 3" evidence="3">
    <location>
        <begin position="991"/>
        <end position="1049"/>
    </location>
</feature>
<feature type="domain" description="TSP type-1 4" evidence="3">
    <location>
        <begin position="1052"/>
        <end position="1116"/>
    </location>
</feature>
<feature type="domain" description="TSP type-1 5" evidence="3">
    <location>
        <begin position="1123"/>
        <end position="1178"/>
    </location>
</feature>
<feature type="domain" description="PLAC" evidence="4">
    <location>
        <begin position="1184"/>
        <end position="1221"/>
    </location>
</feature>
<feature type="region of interest" description="Disordered" evidence="6">
    <location>
        <begin position="258"/>
        <end position="291"/>
    </location>
</feature>
<feature type="region of interest" description="Spacer">
    <location>
        <begin position="750"/>
        <end position="876"/>
    </location>
</feature>
<feature type="short sequence motif" description="Cysteine switch" evidence="1">
    <location>
        <begin position="252"/>
        <end position="259"/>
    </location>
</feature>
<feature type="compositionally biased region" description="Basic and acidic residues" evidence="6">
    <location>
        <begin position="265"/>
        <end position="275"/>
    </location>
</feature>
<feature type="active site" evidence="5">
    <location>
        <position position="437"/>
    </location>
</feature>
<feature type="binding site" description="in inhibited form" evidence="1">
    <location>
        <position position="254"/>
    </location>
    <ligand>
        <name>Zn(2+)</name>
        <dbReference type="ChEBI" id="CHEBI:29105"/>
        <note>catalytic</note>
    </ligand>
</feature>
<feature type="binding site" evidence="5">
    <location>
        <position position="436"/>
    </location>
    <ligand>
        <name>Zn(2+)</name>
        <dbReference type="ChEBI" id="CHEBI:29105"/>
        <note>catalytic</note>
    </ligand>
</feature>
<feature type="binding site" evidence="5">
    <location>
        <position position="440"/>
    </location>
    <ligand>
        <name>Zn(2+)</name>
        <dbReference type="ChEBI" id="CHEBI:29105"/>
        <note>catalytic</note>
    </ligand>
</feature>
<feature type="binding site" evidence="5">
    <location>
        <position position="446"/>
    </location>
    <ligand>
        <name>Zn(2+)</name>
        <dbReference type="ChEBI" id="CHEBI:29105"/>
        <note>catalytic</note>
    </ligand>
</feature>
<feature type="glycosylation site" description="N-linked (GlcNAc...) asparagine" evidence="2">
    <location>
        <position position="151"/>
    </location>
</feature>
<feature type="glycosylation site" description="N-linked (GlcNAc...) asparagine" evidence="2">
    <location>
        <position position="190"/>
    </location>
</feature>
<feature type="glycosylation site" description="N-linked (GlcNAc...) asparagine" evidence="2">
    <location>
        <position position="313"/>
    </location>
</feature>
<feature type="glycosylation site" description="N-linked (GlcNAc...) asparagine" evidence="2">
    <location>
        <position position="745"/>
    </location>
</feature>
<feature type="glycosylation site" description="N-linked (GlcNAc...) asparagine" evidence="2">
    <location>
        <position position="838"/>
    </location>
</feature>
<feature type="glycosylation site" description="N-linked (GlcNAc...) asparagine" evidence="2">
    <location>
        <position position="909"/>
    </location>
</feature>
<feature type="disulfide bond" evidence="1">
    <location>
        <begin position="369"/>
        <end position="420"/>
    </location>
</feature>
<feature type="disulfide bond" evidence="1">
    <location>
        <begin position="395"/>
        <end position="402"/>
    </location>
</feature>
<feature type="disulfide bond" evidence="1">
    <location>
        <begin position="414"/>
        <end position="493"/>
    </location>
</feature>
<feature type="disulfide bond" evidence="1">
    <location>
        <begin position="453"/>
        <end position="477"/>
    </location>
</feature>
<feature type="disulfide bond" evidence="1">
    <location>
        <begin position="521"/>
        <end position="546"/>
    </location>
</feature>
<feature type="disulfide bond" evidence="1">
    <location>
        <begin position="532"/>
        <end position="553"/>
    </location>
</feature>
<feature type="disulfide bond" evidence="1">
    <location>
        <begin position="541"/>
        <end position="572"/>
    </location>
</feature>
<feature type="disulfide bond" evidence="1">
    <location>
        <begin position="566"/>
        <end position="577"/>
    </location>
</feature>
<feature type="disulfide bond" evidence="1">
    <location>
        <begin position="601"/>
        <end position="638"/>
    </location>
</feature>
<feature type="disulfide bond" evidence="1">
    <location>
        <begin position="605"/>
        <end position="643"/>
    </location>
</feature>
<feature type="disulfide bond" evidence="1">
    <location>
        <begin position="616"/>
        <end position="628"/>
    </location>
</feature>
<feature type="splice variant" id="VSP_015776" description="In isoform 2." evidence="14">
    <original>CSATCGLGVRKREMKCSEK</original>
    <variation>VWIRSHCWVRRLRPSWLTQ</variation>
    <location>
        <begin position="1064"/>
        <end position="1082"/>
    </location>
</feature>
<feature type="splice variant" id="VSP_015777" description="In isoform 2." evidence="14">
    <location>
        <begin position="1083"/>
        <end position="1221"/>
    </location>
</feature>
<feature type="sequence variant" id="VAR_066554" description="In dbSNP:rs387906972." evidence="11 12">
    <original>S</original>
    <variation>L</variation>
    <location>
        <position position="179"/>
    </location>
</feature>
<feature type="sequence variant" id="VAR_060231" description="In dbSNP:rs11643211." evidence="9">
    <original>Y</original>
    <variation>H</variation>
    <location>
        <position position="191"/>
    </location>
</feature>
<feature type="sequence variant" id="VAR_070849" description="In MMCAT; dbSNP:rs397515468." evidence="13">
    <original>L</original>
    <variation>P</variation>
    <location>
        <position position="202"/>
    </location>
</feature>
<feature type="sequence variant" id="VAR_036152" description="In a colorectal cancer sample; somatic mutation; dbSNP:rs368783738." evidence="10">
    <original>R</original>
    <variation>K</variation>
    <location>
        <position position="382"/>
    </location>
</feature>
<feature type="sequence variant" id="VAR_036153" description="In a colorectal cancer sample; somatic mutation; dbSNP:rs776584074." evidence="10">
    <original>K</original>
    <variation>T</variation>
    <location>
        <position position="455"/>
    </location>
</feature>
<feature type="sequence variant" id="VAR_070850" description="In MMCAT; dbSNP:rs148319220." evidence="13">
    <original>C</original>
    <variation>W</variation>
    <location>
        <position position="577"/>
    </location>
</feature>
<feature type="sequence variant" id="VAR_060232" description="In dbSNP:rs11640912." evidence="7 9">
    <original>L</original>
    <variation>I</variation>
    <location>
        <position position="626"/>
    </location>
</feature>
<feature type="sequence variant" id="VAR_057083" description="In dbSNP:rs9930984." evidence="9">
    <original>L</original>
    <variation>I</variation>
    <location>
        <position position="769"/>
    </location>
</feature>
<feature type="sequence variant" id="VAR_057084" description="In dbSNP:rs12935394." evidence="7">
    <original>A</original>
    <variation>S</variation>
    <location>
        <position position="946"/>
    </location>
</feature>
<feature type="sequence variant" id="VAR_057085" description="In dbSNP:rs35478105." evidence="8">
    <original>S</original>
    <variation>R</variation>
    <location>
        <position position="1080"/>
    </location>
</feature>
<feature type="sequence variant" id="VAR_057086" description="In dbSNP:rs3743749.">
    <original>S</original>
    <variation>T</variation>
    <location>
        <position position="1159"/>
    </location>
</feature>
<feature type="sequence conflict" description="In Ref. 1; CAC83612." evidence="15" ref="1">
    <original>I</original>
    <variation>T</variation>
    <location>
        <position position="410"/>
    </location>
</feature>
<comment type="cofactor">
    <cofactor evidence="1">
        <name>Zn(2+)</name>
        <dbReference type="ChEBI" id="CHEBI:29105"/>
    </cofactor>
    <text evidence="1">Binds 1 zinc ion per subunit.</text>
</comment>
<comment type="subcellular location">
    <subcellularLocation>
        <location evidence="1">Secreted</location>
        <location evidence="1">Extracellular space</location>
        <location evidence="1">Extracellular matrix</location>
    </subcellularLocation>
</comment>
<comment type="alternative products">
    <event type="alternative splicing"/>
    <isoform>
        <id>Q8TE60-1</id>
        <name>1</name>
        <sequence type="displayed"/>
    </isoform>
    <isoform>
        <id>Q8TE60-2</id>
        <name>2</name>
        <sequence type="described" ref="VSP_015776 VSP_015777"/>
    </isoform>
</comment>
<comment type="tissue specificity">
    <text>Expressed in fetal lung, liver, and kidney and in adult brain, prostate, submaxillary gland, and endothelium.</text>
</comment>
<comment type="domain">
    <text>The conserved cysteine present in the cysteine-switch motif binds the catalytic zinc ion, thus inhibiting the enzyme. The dissociation of the cysteine from the zinc ion upon the activation-peptide release activates the enzyme.</text>
</comment>
<comment type="PTM">
    <text evidence="1">The precursor is cleaved by a furin endopeptidase.</text>
</comment>
<comment type="PTM">
    <text evidence="1">Glycosylated. Can be O-fucosylated by POFUT2 on a serine or a threonine residue found within the consensus sequence C1-X(2)-(S/T)-C2-G of the TSP type-1 repeat domains where C1 and C2 are the first and second cysteine residue of the repeat, respectively. Fucosylated repeats can then be further glycosylated by the addition of a beta-1,3-glucose residue by the glucosyltransferase, B3GALTL. Fucosylation mediates the efficient secretion of ADAMTS family members. Can also be C-glycosylated with one or two mannose molecules on tryptophan residues within the consensus sequence W-X-X-W of the TPRs, and N-glycosylated. These other glycosylations can also facilitate secretion (By similarity).</text>
</comment>
<comment type="disease" evidence="13">
    <disease id="DI-03907">
        <name>Microcornea, myopic chorioretinal atrophy, and telecanthus</name>
        <acronym>MMCAT</acronym>
        <description>A ocular syndrome characterized by microcornea and myopic chorioretinal atrophy. Microcornea is defined by a corneal diameter inferior to 10 mm in both meridians in an otherwise normal eye. In addition to ocular findings, some patients have telecanthus and posteriorly rotated ears.</description>
        <dbReference type="MIM" id="615458"/>
    </disease>
    <text>The disease is caused by variants affecting the gene represented in this entry.</text>
</comment>
<comment type="sequence caution" evidence="15">
    <conflict type="erroneous initiation">
        <sequence resource="EMBL-CDS" id="BAC85503"/>
    </conflict>
    <text>Truncated N-terminus.</text>
</comment>
<comment type="sequence caution" evidence="15">
    <conflict type="miscellaneous discrepancy">
        <sequence resource="EMBL-CDS" id="CAC83612"/>
    </conflict>
    <text>Probable intron retention.</text>
</comment>
<comment type="sequence caution" evidence="15">
    <conflict type="miscellaneous discrepancy">
        <sequence resource="EMBL-CDS" id="CAC83612"/>
    </conflict>
    <text>Aberrant splicing.</text>
</comment>
<organism>
    <name type="scientific">Homo sapiens</name>
    <name type="common">Human</name>
    <dbReference type="NCBI Taxonomy" id="9606"/>
    <lineage>
        <taxon>Eukaryota</taxon>
        <taxon>Metazoa</taxon>
        <taxon>Chordata</taxon>
        <taxon>Craniata</taxon>
        <taxon>Vertebrata</taxon>
        <taxon>Euteleostomi</taxon>
        <taxon>Mammalia</taxon>
        <taxon>Eutheria</taxon>
        <taxon>Euarchontoglires</taxon>
        <taxon>Primates</taxon>
        <taxon>Haplorrhini</taxon>
        <taxon>Catarrhini</taxon>
        <taxon>Hominidae</taxon>
        <taxon>Homo</taxon>
    </lineage>
</organism>
<name>ATS18_HUMAN</name>
<proteinExistence type="evidence at protein level"/>
<keyword id="KW-0025">Alternative splicing</keyword>
<keyword id="KW-0165">Cleavage on pair of basic residues</keyword>
<keyword id="KW-0225">Disease variant</keyword>
<keyword id="KW-1015">Disulfide bond</keyword>
<keyword id="KW-0272">Extracellular matrix</keyword>
<keyword id="KW-0325">Glycoprotein</keyword>
<keyword id="KW-0378">Hydrolase</keyword>
<keyword id="KW-0479">Metal-binding</keyword>
<keyword id="KW-0482">Metalloprotease</keyword>
<keyword id="KW-0645">Protease</keyword>
<keyword id="KW-1185">Reference proteome</keyword>
<keyword id="KW-0677">Repeat</keyword>
<keyword id="KW-0964">Secreted</keyword>
<keyword id="KW-0732">Signal</keyword>
<keyword id="KW-0862">Zinc</keyword>
<keyword id="KW-0865">Zymogen</keyword>
<accession>Q8TE60</accession>
<accession>Q6P4R5</accession>
<accession>Q6ZWJ9</accession>
<evidence type="ECO:0000250" key="1"/>
<evidence type="ECO:0000255" key="2"/>
<evidence type="ECO:0000255" key="3">
    <source>
        <dbReference type="PROSITE-ProRule" id="PRU00210"/>
    </source>
</evidence>
<evidence type="ECO:0000255" key="4">
    <source>
        <dbReference type="PROSITE-ProRule" id="PRU00233"/>
    </source>
</evidence>
<evidence type="ECO:0000255" key="5">
    <source>
        <dbReference type="PROSITE-ProRule" id="PRU00276"/>
    </source>
</evidence>
<evidence type="ECO:0000256" key="6">
    <source>
        <dbReference type="SAM" id="MobiDB-lite"/>
    </source>
</evidence>
<evidence type="ECO:0000269" key="7">
    <source>
    </source>
</evidence>
<evidence type="ECO:0000269" key="8">
    <source>
    </source>
</evidence>
<evidence type="ECO:0000269" key="9">
    <source>
    </source>
</evidence>
<evidence type="ECO:0000269" key="10">
    <source>
    </source>
</evidence>
<evidence type="ECO:0000269" key="11">
    <source>
    </source>
</evidence>
<evidence type="ECO:0000269" key="12">
    <source>
    </source>
</evidence>
<evidence type="ECO:0000269" key="13">
    <source>
    </source>
</evidence>
<evidence type="ECO:0000303" key="14">
    <source>
    </source>
</evidence>
<evidence type="ECO:0000305" key="15"/>
<reference key="1">
    <citation type="journal article" date="2002" name="Gene">
        <title>Cloning, expression analysis, and structural characterization of seven novel human ADAMTSs, a family of metalloproteinases with disintegrin and thrombospondin-1 domains.</title>
        <authorList>
            <person name="Cal S."/>
            <person name="Obaya A.J."/>
            <person name="Llamazares M."/>
            <person name="Garabaya C."/>
            <person name="Quesada V."/>
            <person name="Lopez-Otin C."/>
        </authorList>
    </citation>
    <scope>NUCLEOTIDE SEQUENCE [MRNA] (ISOFORM 2)</scope>
    <scope>VARIANTS ILE-626 AND SER-946</scope>
</reference>
<reference key="2">
    <citation type="journal article" date="2004" name="Nature">
        <title>The sequence and analysis of duplication-rich human chromosome 16.</title>
        <authorList>
            <person name="Martin J."/>
            <person name="Han C."/>
            <person name="Gordon L.A."/>
            <person name="Terry A."/>
            <person name="Prabhakar S."/>
            <person name="She X."/>
            <person name="Xie G."/>
            <person name="Hellsten U."/>
            <person name="Chan Y.M."/>
            <person name="Altherr M."/>
            <person name="Couronne O."/>
            <person name="Aerts A."/>
            <person name="Bajorek E."/>
            <person name="Black S."/>
            <person name="Blumer H."/>
            <person name="Branscomb E."/>
            <person name="Brown N.C."/>
            <person name="Bruno W.J."/>
            <person name="Buckingham J.M."/>
            <person name="Callen D.F."/>
            <person name="Campbell C.S."/>
            <person name="Campbell M.L."/>
            <person name="Campbell E.W."/>
            <person name="Caoile C."/>
            <person name="Challacombe J.F."/>
            <person name="Chasteen L.A."/>
            <person name="Chertkov O."/>
            <person name="Chi H.C."/>
            <person name="Christensen M."/>
            <person name="Clark L.M."/>
            <person name="Cohn J.D."/>
            <person name="Denys M."/>
            <person name="Detter J.C."/>
            <person name="Dickson M."/>
            <person name="Dimitrijevic-Bussod M."/>
            <person name="Escobar J."/>
            <person name="Fawcett J.J."/>
            <person name="Flowers D."/>
            <person name="Fotopulos D."/>
            <person name="Glavina T."/>
            <person name="Gomez M."/>
            <person name="Gonzales E."/>
            <person name="Goodstein D."/>
            <person name="Goodwin L.A."/>
            <person name="Grady D.L."/>
            <person name="Grigoriev I."/>
            <person name="Groza M."/>
            <person name="Hammon N."/>
            <person name="Hawkins T."/>
            <person name="Haydu L."/>
            <person name="Hildebrand C.E."/>
            <person name="Huang W."/>
            <person name="Israni S."/>
            <person name="Jett J."/>
            <person name="Jewett P.B."/>
            <person name="Kadner K."/>
            <person name="Kimball H."/>
            <person name="Kobayashi A."/>
            <person name="Krawczyk M.-C."/>
            <person name="Leyba T."/>
            <person name="Longmire J.L."/>
            <person name="Lopez F."/>
            <person name="Lou Y."/>
            <person name="Lowry S."/>
            <person name="Ludeman T."/>
            <person name="Manohar C.F."/>
            <person name="Mark G.A."/>
            <person name="McMurray K.L."/>
            <person name="Meincke L.J."/>
            <person name="Morgan J."/>
            <person name="Moyzis R.K."/>
            <person name="Mundt M.O."/>
            <person name="Munk A.C."/>
            <person name="Nandkeshwar R.D."/>
            <person name="Pitluck S."/>
            <person name="Pollard M."/>
            <person name="Predki P."/>
            <person name="Parson-Quintana B."/>
            <person name="Ramirez L."/>
            <person name="Rash S."/>
            <person name="Retterer J."/>
            <person name="Ricke D.O."/>
            <person name="Robinson D.L."/>
            <person name="Rodriguez A."/>
            <person name="Salamov A."/>
            <person name="Saunders E.H."/>
            <person name="Scott D."/>
            <person name="Shough T."/>
            <person name="Stallings R.L."/>
            <person name="Stalvey M."/>
            <person name="Sutherland R.D."/>
            <person name="Tapia R."/>
            <person name="Tesmer J.G."/>
            <person name="Thayer N."/>
            <person name="Thompson L.S."/>
            <person name="Tice H."/>
            <person name="Torney D.C."/>
            <person name="Tran-Gyamfi M."/>
            <person name="Tsai M."/>
            <person name="Ulanovsky L.E."/>
            <person name="Ustaszewska A."/>
            <person name="Vo N."/>
            <person name="White P.S."/>
            <person name="Williams A.L."/>
            <person name="Wills P.L."/>
            <person name="Wu J.-R."/>
            <person name="Wu K."/>
            <person name="Yang J."/>
            <person name="DeJong P."/>
            <person name="Bruce D."/>
            <person name="Doggett N.A."/>
            <person name="Deaven L."/>
            <person name="Schmutz J."/>
            <person name="Grimwood J."/>
            <person name="Richardson P."/>
            <person name="Rokhsar D.S."/>
            <person name="Eichler E.E."/>
            <person name="Gilna P."/>
            <person name="Lucas S.M."/>
            <person name="Myers R.M."/>
            <person name="Rubin E.M."/>
            <person name="Pennacchio L.A."/>
        </authorList>
    </citation>
    <scope>NUCLEOTIDE SEQUENCE [LARGE SCALE GENOMIC DNA]</scope>
</reference>
<reference key="3">
    <citation type="journal article" date="2004" name="Genome Res.">
        <title>The status, quality, and expansion of the NIH full-length cDNA project: the Mammalian Gene Collection (MGC).</title>
        <authorList>
            <consortium name="The MGC Project Team"/>
        </authorList>
    </citation>
    <scope>NUCLEOTIDE SEQUENCE [LARGE SCALE MRNA] (ISOFORM 1)</scope>
    <scope>VARIANTS HIS-191; ILE-626 AND ILE-769</scope>
    <source>
        <tissue>Placenta</tissue>
    </source>
</reference>
<reference key="4">
    <citation type="journal article" date="2004" name="Nat. Genet.">
        <title>Complete sequencing and characterization of 21,243 full-length human cDNAs.</title>
        <authorList>
            <person name="Ota T."/>
            <person name="Suzuki Y."/>
            <person name="Nishikawa T."/>
            <person name="Otsuki T."/>
            <person name="Sugiyama T."/>
            <person name="Irie R."/>
            <person name="Wakamatsu A."/>
            <person name="Hayashi K."/>
            <person name="Sato H."/>
            <person name="Nagai K."/>
            <person name="Kimura K."/>
            <person name="Makita H."/>
            <person name="Sekine M."/>
            <person name="Obayashi M."/>
            <person name="Nishi T."/>
            <person name="Shibahara T."/>
            <person name="Tanaka T."/>
            <person name="Ishii S."/>
            <person name="Yamamoto J."/>
            <person name="Saito K."/>
            <person name="Kawai Y."/>
            <person name="Isono Y."/>
            <person name="Nakamura Y."/>
            <person name="Nagahari K."/>
            <person name="Murakami K."/>
            <person name="Yasuda T."/>
            <person name="Iwayanagi T."/>
            <person name="Wagatsuma M."/>
            <person name="Shiratori A."/>
            <person name="Sudo H."/>
            <person name="Hosoiri T."/>
            <person name="Kaku Y."/>
            <person name="Kodaira H."/>
            <person name="Kondo H."/>
            <person name="Sugawara M."/>
            <person name="Takahashi M."/>
            <person name="Kanda K."/>
            <person name="Yokoi T."/>
            <person name="Furuya T."/>
            <person name="Kikkawa E."/>
            <person name="Omura Y."/>
            <person name="Abe K."/>
            <person name="Kamihara K."/>
            <person name="Katsuta N."/>
            <person name="Sato K."/>
            <person name="Tanikawa M."/>
            <person name="Yamazaki M."/>
            <person name="Ninomiya K."/>
            <person name="Ishibashi T."/>
            <person name="Yamashita H."/>
            <person name="Murakawa K."/>
            <person name="Fujimori K."/>
            <person name="Tanai H."/>
            <person name="Kimata M."/>
            <person name="Watanabe M."/>
            <person name="Hiraoka S."/>
            <person name="Chiba Y."/>
            <person name="Ishida S."/>
            <person name="Ono Y."/>
            <person name="Takiguchi S."/>
            <person name="Watanabe S."/>
            <person name="Yosida M."/>
            <person name="Hotuta T."/>
            <person name="Kusano J."/>
            <person name="Kanehori K."/>
            <person name="Takahashi-Fujii A."/>
            <person name="Hara H."/>
            <person name="Tanase T.-O."/>
            <person name="Nomura Y."/>
            <person name="Togiya S."/>
            <person name="Komai F."/>
            <person name="Hara R."/>
            <person name="Takeuchi K."/>
            <person name="Arita M."/>
            <person name="Imose N."/>
            <person name="Musashino K."/>
            <person name="Yuuki H."/>
            <person name="Oshima A."/>
            <person name="Sasaki N."/>
            <person name="Aotsuka S."/>
            <person name="Yoshikawa Y."/>
            <person name="Matsunawa H."/>
            <person name="Ichihara T."/>
            <person name="Shiohata N."/>
            <person name="Sano S."/>
            <person name="Moriya S."/>
            <person name="Momiyama H."/>
            <person name="Satoh N."/>
            <person name="Takami S."/>
            <person name="Terashima Y."/>
            <person name="Suzuki O."/>
            <person name="Nakagawa S."/>
            <person name="Senoh A."/>
            <person name="Mizoguchi H."/>
            <person name="Goto Y."/>
            <person name="Shimizu F."/>
            <person name="Wakebe H."/>
            <person name="Hishigaki H."/>
            <person name="Watanabe T."/>
            <person name="Sugiyama A."/>
            <person name="Takemoto M."/>
            <person name="Kawakami B."/>
            <person name="Yamazaki M."/>
            <person name="Watanabe K."/>
            <person name="Kumagai A."/>
            <person name="Itakura S."/>
            <person name="Fukuzumi Y."/>
            <person name="Fujimori Y."/>
            <person name="Komiyama M."/>
            <person name="Tashiro H."/>
            <person name="Tanigami A."/>
            <person name="Fujiwara T."/>
            <person name="Ono T."/>
            <person name="Yamada K."/>
            <person name="Fujii Y."/>
            <person name="Ozaki K."/>
            <person name="Hirao M."/>
            <person name="Ohmori Y."/>
            <person name="Kawabata A."/>
            <person name="Hikiji T."/>
            <person name="Kobatake N."/>
            <person name="Inagaki H."/>
            <person name="Ikema Y."/>
            <person name="Okamoto S."/>
            <person name="Okitani R."/>
            <person name="Kawakami T."/>
            <person name="Noguchi S."/>
            <person name="Itoh T."/>
            <person name="Shigeta K."/>
            <person name="Senba T."/>
            <person name="Matsumura K."/>
            <person name="Nakajima Y."/>
            <person name="Mizuno T."/>
            <person name="Morinaga M."/>
            <person name="Sasaki M."/>
            <person name="Togashi T."/>
            <person name="Oyama M."/>
            <person name="Hata H."/>
            <person name="Watanabe M."/>
            <person name="Komatsu T."/>
            <person name="Mizushima-Sugano J."/>
            <person name="Satoh T."/>
            <person name="Shirai Y."/>
            <person name="Takahashi Y."/>
            <person name="Nakagawa K."/>
            <person name="Okumura K."/>
            <person name="Nagase T."/>
            <person name="Nomura N."/>
            <person name="Kikuchi H."/>
            <person name="Masuho Y."/>
            <person name="Yamashita R."/>
            <person name="Nakai K."/>
            <person name="Yada T."/>
            <person name="Nakamura Y."/>
            <person name="Ohara O."/>
            <person name="Isogai T."/>
            <person name="Sugano S."/>
        </authorList>
    </citation>
    <scope>NUCLEOTIDE SEQUENCE [LARGE SCALE MRNA] OF 761-1221 (ISOFORM 1)</scope>
    <scope>VARIANT ARG-1080</scope>
    <source>
        <tissue>Cerebellum</tissue>
    </source>
</reference>
<reference key="5">
    <citation type="journal article" date="2009" name="Sci. Signal.">
        <title>Quantitative phosphoproteomic analysis of T cell receptor signaling reveals system-wide modulation of protein-protein interactions.</title>
        <authorList>
            <person name="Mayya V."/>
            <person name="Lundgren D.H."/>
            <person name="Hwang S.-I."/>
            <person name="Rezaul K."/>
            <person name="Wu L."/>
            <person name="Eng J.K."/>
            <person name="Rodionov V."/>
            <person name="Han D.K."/>
        </authorList>
    </citation>
    <scope>IDENTIFICATION BY MASS SPECTROMETRY [LARGE SCALE ANALYSIS]</scope>
    <source>
        <tissue>Leukemic T-cell</tissue>
    </source>
</reference>
<reference key="6">
    <citation type="journal article" date="2006" name="Science">
        <title>The consensus coding sequences of human breast and colorectal cancers.</title>
        <authorList>
            <person name="Sjoeblom T."/>
            <person name="Jones S."/>
            <person name="Wood L.D."/>
            <person name="Parsons D.W."/>
            <person name="Lin J."/>
            <person name="Barber T.D."/>
            <person name="Mandelker D."/>
            <person name="Leary R.J."/>
            <person name="Ptak J."/>
            <person name="Silliman N."/>
            <person name="Szabo S."/>
            <person name="Buckhaults P."/>
            <person name="Farrell C."/>
            <person name="Meeh P."/>
            <person name="Markowitz S.D."/>
            <person name="Willis J."/>
            <person name="Dawson D."/>
            <person name="Willson J.K.V."/>
            <person name="Gazdar A.F."/>
            <person name="Hartigan J."/>
            <person name="Wu L."/>
            <person name="Liu C."/>
            <person name="Parmigiani G."/>
            <person name="Park B.H."/>
            <person name="Bachman K.E."/>
            <person name="Papadopoulos N."/>
            <person name="Vogelstein B."/>
            <person name="Kinzler K.W."/>
            <person name="Velculescu V.E."/>
        </authorList>
    </citation>
    <scope>VARIANTS [LARGE SCALE ANALYSIS] LYS-382 AND THR-455</scope>
</reference>
<reference key="7">
    <citation type="journal article" date="2011" name="J. Med. Genet.">
        <title>Identification of ADAMTS18 as a gene mutated in Knobloch syndrome.</title>
        <authorList>
            <person name="Aldahmesh M.A."/>
            <person name="Khan A.O."/>
            <person name="Mohamed J.Y."/>
            <person name="Alkuraya H."/>
            <person name="Ahmed H."/>
            <person name="Bobis S."/>
            <person name="Al-Mesfer S."/>
            <person name="Alkuraya F.S."/>
        </authorList>
    </citation>
    <scope>VARIANT LEU-179</scope>
</reference>
<reference key="8">
    <citation type="journal article" date="2013" name="Hum. Mutat.">
        <title>The syndrome of microcornea, myopic chorioretinal atrophy, and telecanthus (MMCAT) is caused by mutations in ADAMTS18.</title>
        <authorList>
            <person name="Aldahmesh M.A."/>
            <person name="Alshammari M.J."/>
            <person name="Khan A.O."/>
            <person name="Mohamed J.Y."/>
            <person name="Alhabib F.A."/>
            <person name="Alkuraya F.S."/>
        </authorList>
    </citation>
    <scope>VARIANTS MMCAT PRO-202 AND TRP-577</scope>
</reference>
<reference key="9">
    <citation type="journal article" date="2013" name="J. Med. Genet.">
        <title>No evidence for locus heterogeneity in Knobloch syndrome.</title>
        <authorList>
            <person name="Aldahmesh M.A."/>
            <person name="Khan A.O."/>
            <person name="Mohamed J.Y."/>
            <person name="Levin A.V."/>
            <person name="Wuthisiri W."/>
            <person name="Lynch S."/>
            <person name="McCreery K."/>
            <person name="Alkuraya F.S."/>
        </authorList>
    </citation>
    <scope>VARIANT LEU-179</scope>
    <scope>LACK OF INVOLVEMENT IN KNOBLOCH SYNDROME</scope>
</reference>
<gene>
    <name type="primary">ADAMTS18</name>
    <name type="synonym">ADAMTS21</name>
</gene>
<dbReference type="EC" id="3.4.24.-"/>
<dbReference type="EMBL" id="AJ311903">
    <property type="protein sequence ID" value="CAC83612.1"/>
    <property type="status" value="ALT_SEQ"/>
    <property type="molecule type" value="mRNA"/>
</dbReference>
<dbReference type="EMBL" id="AC009139">
    <property type="status" value="NOT_ANNOTATED_CDS"/>
    <property type="molecule type" value="Genomic_DNA"/>
</dbReference>
<dbReference type="EMBL" id="AC010548">
    <property type="status" value="NOT_ANNOTATED_CDS"/>
    <property type="molecule type" value="Genomic_DNA"/>
</dbReference>
<dbReference type="EMBL" id="AC025284">
    <property type="status" value="NOT_ANNOTATED_CDS"/>
    <property type="molecule type" value="Genomic_DNA"/>
</dbReference>
<dbReference type="EMBL" id="BC063283">
    <property type="protein sequence ID" value="AAH63283.1"/>
    <property type="molecule type" value="mRNA"/>
</dbReference>
<dbReference type="EMBL" id="AK122677">
    <property type="protein sequence ID" value="BAC85503.1"/>
    <property type="status" value="ALT_INIT"/>
    <property type="molecule type" value="mRNA"/>
</dbReference>
<dbReference type="CCDS" id="CCDS10926.1">
    <molecule id="Q8TE60-1"/>
</dbReference>
<dbReference type="RefSeq" id="NP_955387.1">
    <molecule id="Q8TE60-1"/>
    <property type="nucleotide sequence ID" value="NM_199355.4"/>
</dbReference>
<dbReference type="SMR" id="Q8TE60"/>
<dbReference type="BioGRID" id="128084">
    <property type="interactions" value="9"/>
</dbReference>
<dbReference type="FunCoup" id="Q8TE60">
    <property type="interactions" value="90"/>
</dbReference>
<dbReference type="IntAct" id="Q8TE60">
    <property type="interactions" value="6"/>
</dbReference>
<dbReference type="STRING" id="9606.ENSP00000282849"/>
<dbReference type="MEROPS" id="M12.028"/>
<dbReference type="GlyCosmos" id="Q8TE60">
    <property type="glycosylation" value="7 sites, 1 glycan"/>
</dbReference>
<dbReference type="GlyGen" id="Q8TE60">
    <property type="glycosylation" value="8 sites, 1 O-linked glycan (1 site)"/>
</dbReference>
<dbReference type="iPTMnet" id="Q8TE60"/>
<dbReference type="PhosphoSitePlus" id="Q8TE60"/>
<dbReference type="BioMuta" id="ADAMTS18"/>
<dbReference type="DMDM" id="296439427"/>
<dbReference type="jPOST" id="Q8TE60"/>
<dbReference type="PaxDb" id="9606-ENSP00000282849"/>
<dbReference type="PeptideAtlas" id="Q8TE60"/>
<dbReference type="ProteomicsDB" id="74402">
    <molecule id="Q8TE60-1"/>
</dbReference>
<dbReference type="ProteomicsDB" id="74403">
    <molecule id="Q8TE60-2"/>
</dbReference>
<dbReference type="Antibodypedia" id="30389">
    <property type="antibodies" value="151 antibodies from 25 providers"/>
</dbReference>
<dbReference type="DNASU" id="170692"/>
<dbReference type="Ensembl" id="ENST00000282849.10">
    <molecule id="Q8TE60-1"/>
    <property type="protein sequence ID" value="ENSP00000282849.5"/>
    <property type="gene ID" value="ENSG00000140873.16"/>
</dbReference>
<dbReference type="GeneID" id="170692"/>
<dbReference type="KEGG" id="hsa:170692"/>
<dbReference type="MANE-Select" id="ENST00000282849.10">
    <property type="protein sequence ID" value="ENSP00000282849.5"/>
    <property type="RefSeq nucleotide sequence ID" value="NM_199355.4"/>
    <property type="RefSeq protein sequence ID" value="NP_955387.1"/>
</dbReference>
<dbReference type="UCSC" id="uc002ffc.4">
    <molecule id="Q8TE60-1"/>
    <property type="organism name" value="human"/>
</dbReference>
<dbReference type="AGR" id="HGNC:17110"/>
<dbReference type="CTD" id="170692"/>
<dbReference type="DisGeNET" id="170692"/>
<dbReference type="GeneCards" id="ADAMTS18"/>
<dbReference type="HGNC" id="HGNC:17110">
    <property type="gene designation" value="ADAMTS18"/>
</dbReference>
<dbReference type="HPA" id="ENSG00000140873">
    <property type="expression patterns" value="Group enriched (brain, placenta)"/>
</dbReference>
<dbReference type="MalaCards" id="ADAMTS18"/>
<dbReference type="MIM" id="607512">
    <property type="type" value="gene"/>
</dbReference>
<dbReference type="MIM" id="615458">
    <property type="type" value="phenotype"/>
</dbReference>
<dbReference type="neXtProt" id="NX_Q8TE60"/>
<dbReference type="OpenTargets" id="ENSG00000140873"/>
<dbReference type="Orphanet" id="369970">
    <property type="disease" value="Microcornea-myopic chorioretinal atrophy-telecanthus syndrome"/>
</dbReference>
<dbReference type="PharmGKB" id="PA24544"/>
<dbReference type="VEuPathDB" id="HostDB:ENSG00000140873"/>
<dbReference type="eggNOG" id="KOG3538">
    <property type="taxonomic scope" value="Eukaryota"/>
</dbReference>
<dbReference type="GeneTree" id="ENSGT00940000157553"/>
<dbReference type="HOGENOM" id="CLU_000660_1_0_1"/>
<dbReference type="InParanoid" id="Q8TE60"/>
<dbReference type="OMA" id="IQPCHTQ"/>
<dbReference type="OrthoDB" id="10035764at2759"/>
<dbReference type="PAN-GO" id="Q8TE60">
    <property type="GO annotations" value="3 GO annotations based on evolutionary models"/>
</dbReference>
<dbReference type="PhylomeDB" id="Q8TE60"/>
<dbReference type="TreeFam" id="TF313537"/>
<dbReference type="PathwayCommons" id="Q8TE60"/>
<dbReference type="Reactome" id="R-HSA-1474228">
    <property type="pathway name" value="Degradation of the extracellular matrix"/>
</dbReference>
<dbReference type="Reactome" id="R-HSA-5083635">
    <property type="pathway name" value="Defective B3GALTL causes PpS"/>
</dbReference>
<dbReference type="Reactome" id="R-HSA-5173214">
    <property type="pathway name" value="O-glycosylation of TSR domain-containing proteins"/>
</dbReference>
<dbReference type="SignaLink" id="Q8TE60"/>
<dbReference type="BioGRID-ORCS" id="170692">
    <property type="hits" value="10 hits in 1144 CRISPR screens"/>
</dbReference>
<dbReference type="ChiTaRS" id="ADAMTS18">
    <property type="organism name" value="human"/>
</dbReference>
<dbReference type="GenomeRNAi" id="170692"/>
<dbReference type="Pharos" id="Q8TE60">
    <property type="development level" value="Tbio"/>
</dbReference>
<dbReference type="PRO" id="PR:Q8TE60"/>
<dbReference type="Proteomes" id="UP000005640">
    <property type="component" value="Chromosome 16"/>
</dbReference>
<dbReference type="RNAct" id="Q8TE60">
    <property type="molecule type" value="protein"/>
</dbReference>
<dbReference type="Bgee" id="ENSG00000140873">
    <property type="expression patterns" value="Expressed in cerebellar vermis and 118 other cell types or tissues"/>
</dbReference>
<dbReference type="ExpressionAtlas" id="Q8TE60">
    <property type="expression patterns" value="baseline and differential"/>
</dbReference>
<dbReference type="GO" id="GO:0031012">
    <property type="term" value="C:extracellular matrix"/>
    <property type="evidence" value="ECO:0000318"/>
    <property type="project" value="GO_Central"/>
</dbReference>
<dbReference type="GO" id="GO:0005576">
    <property type="term" value="C:extracellular region"/>
    <property type="evidence" value="ECO:0007669"/>
    <property type="project" value="UniProtKB-KW"/>
</dbReference>
<dbReference type="GO" id="GO:0046872">
    <property type="term" value="F:metal ion binding"/>
    <property type="evidence" value="ECO:0007669"/>
    <property type="project" value="UniProtKB-KW"/>
</dbReference>
<dbReference type="GO" id="GO:0004222">
    <property type="term" value="F:metalloendopeptidase activity"/>
    <property type="evidence" value="ECO:0000318"/>
    <property type="project" value="GO_Central"/>
</dbReference>
<dbReference type="GO" id="GO:0030198">
    <property type="term" value="P:extracellular matrix organization"/>
    <property type="evidence" value="ECO:0000318"/>
    <property type="project" value="GO_Central"/>
</dbReference>
<dbReference type="GO" id="GO:0001654">
    <property type="term" value="P:eye development"/>
    <property type="evidence" value="ECO:0000315"/>
    <property type="project" value="UniProtKB"/>
</dbReference>
<dbReference type="GO" id="GO:0090331">
    <property type="term" value="P:negative regulation of platelet aggregation"/>
    <property type="evidence" value="ECO:0000314"/>
    <property type="project" value="MGI"/>
</dbReference>
<dbReference type="GO" id="GO:0006508">
    <property type="term" value="P:proteolysis"/>
    <property type="evidence" value="ECO:0000318"/>
    <property type="project" value="GO_Central"/>
</dbReference>
<dbReference type="CDD" id="cd04273">
    <property type="entry name" value="ZnMc_ADAMTS_like"/>
    <property type="match status" value="1"/>
</dbReference>
<dbReference type="FunFam" id="2.20.100.10:FF:000006">
    <property type="entry name" value="A disintegrin and metalloproteinase with thrombospondin motifs 1"/>
    <property type="match status" value="1"/>
</dbReference>
<dbReference type="FunFam" id="2.60.120.830:FF:000001">
    <property type="entry name" value="A disintegrin and metalloproteinase with thrombospondin motifs 1"/>
    <property type="match status" value="1"/>
</dbReference>
<dbReference type="FunFam" id="3.40.390.10:FF:000001">
    <property type="entry name" value="A disintegrin and metalloproteinase with thrombospondin motifs 1"/>
    <property type="match status" value="1"/>
</dbReference>
<dbReference type="FunFam" id="3.40.1620.60:FF:000002">
    <property type="entry name" value="A disintegrin and metalloproteinase with thrombospondin motifs 10"/>
    <property type="match status" value="1"/>
</dbReference>
<dbReference type="FunFam" id="2.20.100.10:FF:000066">
    <property type="entry name" value="A disintegrin and metalloproteinase with thrombospondin motifs 18"/>
    <property type="match status" value="1"/>
</dbReference>
<dbReference type="FunFam" id="2.20.100.10:FF:000088">
    <property type="entry name" value="A disintegrin and metalloproteinase with thrombospondin motifs 18"/>
    <property type="match status" value="1"/>
</dbReference>
<dbReference type="FunFam" id="2.20.100.10:FF:000094">
    <property type="entry name" value="ADAM metallopeptidase with thrombospondin type 1 motif, 18"/>
    <property type="match status" value="1"/>
</dbReference>
<dbReference type="FunFam" id="2.20.100.10:FF:000009">
    <property type="entry name" value="ADAMTS-like protein 3 isoform A"/>
    <property type="match status" value="1"/>
</dbReference>
<dbReference type="Gene3D" id="2.60.120.830">
    <property type="match status" value="1"/>
</dbReference>
<dbReference type="Gene3D" id="3.40.1620.60">
    <property type="match status" value="1"/>
</dbReference>
<dbReference type="Gene3D" id="3.40.390.10">
    <property type="entry name" value="Collagenase (Catalytic Domain)"/>
    <property type="match status" value="1"/>
</dbReference>
<dbReference type="Gene3D" id="2.20.100.10">
    <property type="entry name" value="Thrombospondin type-1 (TSP1) repeat"/>
    <property type="match status" value="6"/>
</dbReference>
<dbReference type="InterPro" id="IPR013273">
    <property type="entry name" value="ADAMTS/ADAMTS-like"/>
</dbReference>
<dbReference type="InterPro" id="IPR050439">
    <property type="entry name" value="ADAMTS_ADAMTS-like"/>
</dbReference>
<dbReference type="InterPro" id="IPR041645">
    <property type="entry name" value="ADAMTS_CR_2"/>
</dbReference>
<dbReference type="InterPro" id="IPR045371">
    <property type="entry name" value="ADAMTS_CR_3"/>
</dbReference>
<dbReference type="InterPro" id="IPR010294">
    <property type="entry name" value="ADAMTS_spacer1"/>
</dbReference>
<dbReference type="InterPro" id="IPR024079">
    <property type="entry name" value="MetalloPept_cat_dom_sf"/>
</dbReference>
<dbReference type="InterPro" id="IPR001590">
    <property type="entry name" value="Peptidase_M12B"/>
</dbReference>
<dbReference type="InterPro" id="IPR002870">
    <property type="entry name" value="Peptidase_M12B_N"/>
</dbReference>
<dbReference type="InterPro" id="IPR010909">
    <property type="entry name" value="PLAC"/>
</dbReference>
<dbReference type="InterPro" id="IPR000884">
    <property type="entry name" value="TSP1_rpt"/>
</dbReference>
<dbReference type="InterPro" id="IPR036383">
    <property type="entry name" value="TSP1_rpt_sf"/>
</dbReference>
<dbReference type="PANTHER" id="PTHR13723:SF167">
    <property type="entry name" value="A DISINTEGRIN AND METALLOPROTEINASE WITH THROMBOSPONDIN MOTIFS 18"/>
    <property type="match status" value="1"/>
</dbReference>
<dbReference type="PANTHER" id="PTHR13723">
    <property type="entry name" value="ADAMTS A DISINTEGRIN AND METALLOPROTEASE WITH THROMBOSPONDIN MOTIFS PROTEASE"/>
    <property type="match status" value="1"/>
</dbReference>
<dbReference type="Pfam" id="PF17771">
    <property type="entry name" value="ADAMTS_CR_2"/>
    <property type="match status" value="1"/>
</dbReference>
<dbReference type="Pfam" id="PF19236">
    <property type="entry name" value="ADAMTS_CR_3"/>
    <property type="match status" value="1"/>
</dbReference>
<dbReference type="Pfam" id="PF05986">
    <property type="entry name" value="ADAMTS_spacer1"/>
    <property type="match status" value="1"/>
</dbReference>
<dbReference type="Pfam" id="PF01562">
    <property type="entry name" value="Pep_M12B_propep"/>
    <property type="match status" value="1"/>
</dbReference>
<dbReference type="Pfam" id="PF08686">
    <property type="entry name" value="PLAC"/>
    <property type="match status" value="1"/>
</dbReference>
<dbReference type="Pfam" id="PF01421">
    <property type="entry name" value="Reprolysin"/>
    <property type="match status" value="1"/>
</dbReference>
<dbReference type="Pfam" id="PF19030">
    <property type="entry name" value="TSP1_ADAMTS"/>
    <property type="match status" value="4"/>
</dbReference>
<dbReference type="Pfam" id="PF00090">
    <property type="entry name" value="TSP_1"/>
    <property type="match status" value="1"/>
</dbReference>
<dbReference type="PRINTS" id="PR01857">
    <property type="entry name" value="ADAMTSFAMILY"/>
</dbReference>
<dbReference type="SMART" id="SM00209">
    <property type="entry name" value="TSP1"/>
    <property type="match status" value="6"/>
</dbReference>
<dbReference type="SUPFAM" id="SSF55486">
    <property type="entry name" value="Metalloproteases ('zincins'), catalytic domain"/>
    <property type="match status" value="1"/>
</dbReference>
<dbReference type="SUPFAM" id="SSF82895">
    <property type="entry name" value="TSP-1 type 1 repeat"/>
    <property type="match status" value="5"/>
</dbReference>
<dbReference type="PROSITE" id="PS50215">
    <property type="entry name" value="ADAM_MEPRO"/>
    <property type="match status" value="1"/>
</dbReference>
<dbReference type="PROSITE" id="PS50900">
    <property type="entry name" value="PLAC"/>
    <property type="match status" value="1"/>
</dbReference>
<dbReference type="PROSITE" id="PS50092">
    <property type="entry name" value="TSP1"/>
    <property type="match status" value="5"/>
</dbReference>
<protein>
    <recommendedName>
        <fullName>A disintegrin and metalloproteinase with thrombospondin motifs 18</fullName>
        <shortName>ADAM-TS 18</shortName>
        <shortName>ADAM-TS18</shortName>
        <shortName>ADAMTS-18</shortName>
        <ecNumber>3.4.24.-</ecNumber>
    </recommendedName>
</protein>
<sequence length="1221" mass="135167">MECALLLACAFPAAGSGPPRGLAGLGRVAKALQLCCLCCASVAAALASDSSSGASGLNDDYVFVTPVEVDSAGSYISHDILHNGRKKRSAQNARSSLHYRFSAFGQELHLELKPSAILSSHFIVQVLGKDGASETQKPEVQQCFYQGFIRNDSSSSVAVSTCAGLSGLIRTRKNEFLISPLPQLLAQEHNYSSPAGHHPHVLYKRTAEEKIQRYRGYPGSGRNYPGYSPSHIPHASQSRETEYHHRRLQKQHFCGRRKKYAPKPPTEDTYLRFDEYGSSGRPRRSAGKSQKGLNVETLVVADKKMVEKHGKGNVTTYILTVMNMVSGLFKDGTIGSDINVVVVSLILLEQEPGGLLINHHADQSLNSFCQWQSALIGKNGKRHDHAILLTGFDICSWKNEPCDTLGFAPISGMCSKYRSCTINEDTGLGLAFTIAHESGHNFGMIHDGEGNPCRKAEGNIMSPTLTGNNGVFSWSSCSRQYLKKFLSTPQAGCLVDEPKQAGQYKYPDKLPGQIYDADTQCKWQFGAKAKLCSLGFVKDICKSLWCHRVGHRCETKFMPAAEGTVCGLSMWCRQGQCVKFGELGPRPIHGQWSAWSKWSECSRTCGGGVKFQERHCNNPKPQYGGLFCPGSSRIYQLCNINPCNENSLDFRAQQCAEYNSKPFRGWFYQWKPYTKVEEEDRCKLYCKAENFEFFFAMSGKVKDGTPCSPNKNDVCIDGVCELVGCDHELGSKAVSDACGVCKGDNSTCKFYKGLYLNQHKANEYYPVVLIPAGARSIEIQELQVSSSYLAVRSLSQKYYLTGGWSIDWPGEFPFAGTTFEYQRSFNRPERLYAPGPTNETLVFEILMQGKNPGIAWKYALPKVMNGTPPATKRPAYTWSIVQSECSVSCGGGYINVKAICLRDQNTQVNSSFCSAKTKPVTEPKICNAFSCPAYWMPGEWSTCSKACAGGQQSRKIQCVQKKPFQKEEAVLHSLCPVSTPTQVQACNSHACPPQWSLGPWSQCSKTCGRGVRKRELLCKGSAAETLPESQCTSLPRPELQEGCVLGRCPKNSRLQWVASSWSECSATCGLGVRKREMKCSEKGFQGKLITFPERRCRNIKKPNLDLEETCNRRACPAHPVYNMVAGWYSLPWQQCTVTCGGGVQTRSVHCVQQGRPSSSCLLHQKPPVLRACNTNFCPAPEKREDPSCVDFFNWCHLVPQHGVCNHKFYGKQCCKSCTRKI</sequence>